<keyword id="KW-0866">Nonsense-mediated mRNA decay</keyword>
<keyword id="KW-1185">Reference proteome</keyword>
<organism>
    <name type="scientific">Drosophila mojavensis</name>
    <name type="common">Fruit fly</name>
    <dbReference type="NCBI Taxonomy" id="7230"/>
    <lineage>
        <taxon>Eukaryota</taxon>
        <taxon>Metazoa</taxon>
        <taxon>Ecdysozoa</taxon>
        <taxon>Arthropoda</taxon>
        <taxon>Hexapoda</taxon>
        <taxon>Insecta</taxon>
        <taxon>Pterygota</taxon>
        <taxon>Neoptera</taxon>
        <taxon>Endopterygota</taxon>
        <taxon>Diptera</taxon>
        <taxon>Brachycera</taxon>
        <taxon>Muscomorpha</taxon>
        <taxon>Ephydroidea</taxon>
        <taxon>Drosophilidae</taxon>
        <taxon>Drosophila</taxon>
    </lineage>
</organism>
<dbReference type="EMBL" id="CH933807">
    <property type="protein sequence ID" value="EDW12699.1"/>
    <property type="molecule type" value="Genomic_DNA"/>
</dbReference>
<dbReference type="SMR" id="B4KKN5"/>
<dbReference type="FunCoup" id="B4KKN5">
    <property type="interactions" value="2859"/>
</dbReference>
<dbReference type="EnsemblMetazoa" id="FBtr0168542">
    <property type="protein sequence ID" value="FBpp0167034"/>
    <property type="gene ID" value="FBgn0140558"/>
</dbReference>
<dbReference type="EnsemblMetazoa" id="XM_002003221.4">
    <property type="protein sequence ID" value="XP_002003257.1"/>
    <property type="gene ID" value="LOC6577290"/>
</dbReference>
<dbReference type="GeneID" id="6577290"/>
<dbReference type="KEGG" id="dmo:Dmoj_GI17817"/>
<dbReference type="eggNOG" id="KOG3692">
    <property type="taxonomic scope" value="Eukaryota"/>
</dbReference>
<dbReference type="HOGENOM" id="CLU_008116_0_0_1"/>
<dbReference type="InParanoid" id="B4KKN5"/>
<dbReference type="OMA" id="HVCHIVV"/>
<dbReference type="OrthoDB" id="63589at2759"/>
<dbReference type="PhylomeDB" id="B4KKN5"/>
<dbReference type="Proteomes" id="UP000009192">
    <property type="component" value="Unassembled WGS sequence"/>
</dbReference>
<dbReference type="GO" id="GO:0000184">
    <property type="term" value="P:nuclear-transcribed mRNA catabolic process, nonsense-mediated decay"/>
    <property type="evidence" value="ECO:0000250"/>
    <property type="project" value="UniProtKB"/>
</dbReference>
<dbReference type="InterPro" id="IPR019354">
    <property type="entry name" value="SMG8-like"/>
</dbReference>
<dbReference type="PANTHER" id="PTHR13091">
    <property type="entry name" value="AMPLIFIED IN BREAST CANCER 2-RELATED"/>
    <property type="match status" value="1"/>
</dbReference>
<dbReference type="PANTHER" id="PTHR13091:SF0">
    <property type="entry name" value="NONSENSE-MEDIATED MRNA DECAY FACTOR SMG8"/>
    <property type="match status" value="1"/>
</dbReference>
<dbReference type="Pfam" id="PF10220">
    <property type="entry name" value="Smg8_Smg9"/>
    <property type="match status" value="1"/>
</dbReference>
<gene>
    <name type="ORF">GI17817</name>
</gene>
<reference key="1">
    <citation type="journal article" date="2007" name="Nature">
        <title>Evolution of genes and genomes on the Drosophila phylogeny.</title>
        <authorList>
            <consortium name="Drosophila 12 genomes consortium"/>
        </authorList>
    </citation>
    <scope>NUCLEOTIDE SEQUENCE [LARGE SCALE GENOMIC DNA]</scope>
    <source>
        <strain>Tucson 15081-1352.22</strain>
    </source>
</reference>
<feature type="chain" id="PRO_0000378175" description="Nonsense-mediated mRNA decay factor SMG8">
    <location>
        <begin position="1"/>
        <end position="967"/>
    </location>
</feature>
<feature type="region of interest" description="Disordered" evidence="3">
    <location>
        <begin position="627"/>
        <end position="702"/>
    </location>
</feature>
<feature type="compositionally biased region" description="Acidic residues" evidence="3">
    <location>
        <begin position="628"/>
        <end position="639"/>
    </location>
</feature>
<feature type="compositionally biased region" description="Low complexity" evidence="3">
    <location>
        <begin position="643"/>
        <end position="666"/>
    </location>
</feature>
<feature type="compositionally biased region" description="Polar residues" evidence="3">
    <location>
        <begin position="686"/>
        <end position="702"/>
    </location>
</feature>
<proteinExistence type="inferred from homology"/>
<protein>
    <recommendedName>
        <fullName evidence="2">Nonsense-mediated mRNA decay factor SMG8</fullName>
    </recommendedName>
    <alternativeName>
        <fullName>Protein smg-8 homolog</fullName>
    </alternativeName>
</protein>
<comment type="function">
    <text evidence="1">Involved in nonsense-mediated decay (NMD) of mRNAs containing premature stop codons. Probable component of kinase complex containing nonC and recruited to stalled ribosomes (By similarity).</text>
</comment>
<comment type="similarity">
    <text evidence="4">Belongs to the SMG8 family.</text>
</comment>
<sequence length="967" mass="109269">MSSKSYYTWKYPDIPENVESMLAELNNSLVVVGVIGRSRGPQANKMSAFDMRPNKLHEPADGQILCYYKPGTNTLMLHFETTYDEAVLSQQLLSQTSIDFDNFYYRMRSRFVRNMLLALHVCHIVVYVDTAEIFDTTLVTICQLLKYVREQHVLEFLPQMLHETSVGLMLGDRARPCTPRMLFLFENYPRDEEKTRDHISSYEFKTEDQIYHLLRQYNILTNNVNTSLVALPNNKQFVFYNAHEELHPDQLSHAIEALNTTMNKPDAKEEDEDLDIISLAPFEGFVKPFGADYKTRDSKELDYKKNHTAWHFLQRHVQDALQGYFDEGSFKLLTQTPQYQLLSARDWHSCMAEIYRLLIQNVHDANYVTDNTNYQAYLRELNESLNYEKKFWCHLCELGLKKGVSAYRNAAPAIYGSATHNQLLADATLAFEEEGRGPYVEMALAKLSDVCLKYWHDGRQQCEQLSLRGHPCTLPKDLAHDKHSSGIVHISSCNCGRTQGRREDPFTLRQANYDYYEQLAVMCNLCVKVKKFQFPLFTPSISDYRAAAFEAAFPLLLASKNRLEPAVQGDSDLDAEAADELYSQPIKAAEPAPQKQLQTLGDCCSQPLSATYGSDLNMSIAGFGDSLNEGEDADADADSPEIRSQICSSGQSSRSRSNSSSSDTSSANTENELVLQLKERSDQKNATEALSESCPESQSVASMPELVSTTEYLPGLVHMCSACELLPLFPSWSLACVGPSSIYSHNTGLQEHFQSGFLSGANFLLPWDVHVRLLQPHHKHPPLQQMGKKNQRYRKQGDRLALKIFVGFEYECSRGHRFMMCSPDRVLRGGADIERDTCSKLVNNNMPLYFPCPCRGQVSFLAQLMRIHVVTPKAPVNIIVDPKVRVGKYTFTLGCTVLPRLSQSAYWILRFPYVYQGDNVLIAPPAKFEPDDPFASGCLLAGMFGIAETDTTDAIQSAGAPLNFTRL</sequence>
<name>SMG8_DROMO</name>
<evidence type="ECO:0000250" key="1"/>
<evidence type="ECO:0000250" key="2">
    <source>
        <dbReference type="UniProtKB" id="Q8ND04"/>
    </source>
</evidence>
<evidence type="ECO:0000256" key="3">
    <source>
        <dbReference type="SAM" id="MobiDB-lite"/>
    </source>
</evidence>
<evidence type="ECO:0000305" key="4"/>
<accession>B4KKN5</accession>